<comment type="function">
    <text evidence="1">This is one of the proteins that bind and probably mediate the attachment of the 5S RNA into the large ribosomal subunit, where it forms part of the central protuberance. In the 70S ribosome it contacts protein S13 of the 30S subunit (bridge B1b), connecting the 2 subunits; this bridge is implicated in subunit movement. May contact the P site tRNA; the 5S rRNA and some of its associated proteins might help stabilize positioning of ribosome-bound tRNAs.</text>
</comment>
<comment type="subunit">
    <text evidence="1">Part of the 50S ribosomal subunit; contacts the 5S rRNA and probably tRNA. Forms a bridge to the 30S subunit in the 70S ribosome.</text>
</comment>
<comment type="similarity">
    <text evidence="1">Belongs to the universal ribosomal protein uL5 family.</text>
</comment>
<dbReference type="EMBL" id="AE000782">
    <property type="protein sequence ID" value="AAB89357.1"/>
    <property type="molecule type" value="Genomic_DNA"/>
</dbReference>
<dbReference type="PIR" id="G69488">
    <property type="entry name" value="G69488"/>
</dbReference>
<dbReference type="RefSeq" id="WP_010879405.1">
    <property type="nucleotide sequence ID" value="NC_000917.1"/>
</dbReference>
<dbReference type="SMR" id="O28367"/>
<dbReference type="STRING" id="224325.AF_1912"/>
<dbReference type="PaxDb" id="224325-AF_1912"/>
<dbReference type="EnsemblBacteria" id="AAB89357">
    <property type="protein sequence ID" value="AAB89357"/>
    <property type="gene ID" value="AF_1912"/>
</dbReference>
<dbReference type="KEGG" id="afu:AF_1912"/>
<dbReference type="eggNOG" id="arCOG04092">
    <property type="taxonomic scope" value="Archaea"/>
</dbReference>
<dbReference type="HOGENOM" id="CLU_061015_3_0_2"/>
<dbReference type="OrthoDB" id="372044at2157"/>
<dbReference type="PhylomeDB" id="O28367"/>
<dbReference type="Proteomes" id="UP000002199">
    <property type="component" value="Chromosome"/>
</dbReference>
<dbReference type="GO" id="GO:1990904">
    <property type="term" value="C:ribonucleoprotein complex"/>
    <property type="evidence" value="ECO:0007669"/>
    <property type="project" value="UniProtKB-KW"/>
</dbReference>
<dbReference type="GO" id="GO:0005840">
    <property type="term" value="C:ribosome"/>
    <property type="evidence" value="ECO:0007669"/>
    <property type="project" value="UniProtKB-KW"/>
</dbReference>
<dbReference type="GO" id="GO:0019843">
    <property type="term" value="F:rRNA binding"/>
    <property type="evidence" value="ECO:0007669"/>
    <property type="project" value="UniProtKB-UniRule"/>
</dbReference>
<dbReference type="GO" id="GO:0003735">
    <property type="term" value="F:structural constituent of ribosome"/>
    <property type="evidence" value="ECO:0007669"/>
    <property type="project" value="InterPro"/>
</dbReference>
<dbReference type="GO" id="GO:0000049">
    <property type="term" value="F:tRNA binding"/>
    <property type="evidence" value="ECO:0007669"/>
    <property type="project" value="UniProtKB-UniRule"/>
</dbReference>
<dbReference type="GO" id="GO:0006412">
    <property type="term" value="P:translation"/>
    <property type="evidence" value="ECO:0007669"/>
    <property type="project" value="UniProtKB-UniRule"/>
</dbReference>
<dbReference type="FunFam" id="3.30.1440.10:FF:000002">
    <property type="entry name" value="60S ribosomal protein L11"/>
    <property type="match status" value="1"/>
</dbReference>
<dbReference type="Gene3D" id="3.30.1440.10">
    <property type="match status" value="1"/>
</dbReference>
<dbReference type="HAMAP" id="MF_01333_A">
    <property type="entry name" value="Ribosomal_uL5_A"/>
    <property type="match status" value="1"/>
</dbReference>
<dbReference type="InterPro" id="IPR002132">
    <property type="entry name" value="Ribosomal_uL5"/>
</dbReference>
<dbReference type="InterPro" id="IPR022804">
    <property type="entry name" value="Ribosomal_uL5_arc"/>
</dbReference>
<dbReference type="InterPro" id="IPR031309">
    <property type="entry name" value="Ribosomal_uL5_C"/>
</dbReference>
<dbReference type="InterPro" id="IPR020929">
    <property type="entry name" value="Ribosomal_uL5_CS"/>
</dbReference>
<dbReference type="InterPro" id="IPR022803">
    <property type="entry name" value="Ribosomal_uL5_dom_sf"/>
</dbReference>
<dbReference type="InterPro" id="IPR031310">
    <property type="entry name" value="Ribosomal_uL5_N"/>
</dbReference>
<dbReference type="NCBIfam" id="NF003258">
    <property type="entry name" value="PRK04219.1"/>
    <property type="match status" value="1"/>
</dbReference>
<dbReference type="PANTHER" id="PTHR11994">
    <property type="entry name" value="60S RIBOSOMAL PROTEIN L11-RELATED"/>
    <property type="match status" value="1"/>
</dbReference>
<dbReference type="Pfam" id="PF00281">
    <property type="entry name" value="Ribosomal_L5"/>
    <property type="match status" value="1"/>
</dbReference>
<dbReference type="Pfam" id="PF00673">
    <property type="entry name" value="Ribosomal_L5_C"/>
    <property type="match status" value="1"/>
</dbReference>
<dbReference type="PIRSF" id="PIRSF002161">
    <property type="entry name" value="Ribosomal_L5"/>
    <property type="match status" value="1"/>
</dbReference>
<dbReference type="SUPFAM" id="SSF55282">
    <property type="entry name" value="RL5-like"/>
    <property type="match status" value="1"/>
</dbReference>
<dbReference type="PROSITE" id="PS00358">
    <property type="entry name" value="RIBOSOMAL_L5"/>
    <property type="match status" value="1"/>
</dbReference>
<accession>O28367</accession>
<organism>
    <name type="scientific">Archaeoglobus fulgidus (strain ATCC 49558 / DSM 4304 / JCM 9628 / NBRC 100126 / VC-16)</name>
    <dbReference type="NCBI Taxonomy" id="224325"/>
    <lineage>
        <taxon>Archaea</taxon>
        <taxon>Methanobacteriati</taxon>
        <taxon>Methanobacteriota</taxon>
        <taxon>Archaeoglobi</taxon>
        <taxon>Archaeoglobales</taxon>
        <taxon>Archaeoglobaceae</taxon>
        <taxon>Archaeoglobus</taxon>
    </lineage>
</organism>
<protein>
    <recommendedName>
        <fullName evidence="1">Large ribosomal subunit protein uL5</fullName>
    </recommendedName>
    <alternativeName>
        <fullName evidence="2">50S ribosomal protein L5</fullName>
    </alternativeName>
</protein>
<proteinExistence type="inferred from homology"/>
<keyword id="KW-1185">Reference proteome</keyword>
<keyword id="KW-0687">Ribonucleoprotein</keyword>
<keyword id="KW-0689">Ribosomal protein</keyword>
<keyword id="KW-0694">RNA-binding</keyword>
<keyword id="KW-0699">rRNA-binding</keyword>
<keyword id="KW-0820">tRNA-binding</keyword>
<sequence length="178" mass="20058">MQAVEMEKKAGNENPMREVVLDKVVINIGVGESGERHKKAYSLLEELVEQKPAITYAKMTIKNFGIRKGEAIGIKVTLRGEKALKFLKDALTVKENRLSRKSIGEGYFAFGIAEHIDLPGVDYDPDVGIFGMDVCVSLKRRGYRVARRRRKKAKIATSHRVTKEDTIRWLESLGVIVE</sequence>
<evidence type="ECO:0000255" key="1">
    <source>
        <dbReference type="HAMAP-Rule" id="MF_01333"/>
    </source>
</evidence>
<evidence type="ECO:0000305" key="2"/>
<reference key="1">
    <citation type="journal article" date="1997" name="Nature">
        <title>The complete genome sequence of the hyperthermophilic, sulphate-reducing archaeon Archaeoglobus fulgidus.</title>
        <authorList>
            <person name="Klenk H.-P."/>
            <person name="Clayton R.A."/>
            <person name="Tomb J.-F."/>
            <person name="White O."/>
            <person name="Nelson K.E."/>
            <person name="Ketchum K.A."/>
            <person name="Dodson R.J."/>
            <person name="Gwinn M.L."/>
            <person name="Hickey E.K."/>
            <person name="Peterson J.D."/>
            <person name="Richardson D.L."/>
            <person name="Kerlavage A.R."/>
            <person name="Graham D.E."/>
            <person name="Kyrpides N.C."/>
            <person name="Fleischmann R.D."/>
            <person name="Quackenbush J."/>
            <person name="Lee N.H."/>
            <person name="Sutton G.G."/>
            <person name="Gill S.R."/>
            <person name="Kirkness E.F."/>
            <person name="Dougherty B.A."/>
            <person name="McKenney K."/>
            <person name="Adams M.D."/>
            <person name="Loftus B.J."/>
            <person name="Peterson S.N."/>
            <person name="Reich C.I."/>
            <person name="McNeil L.K."/>
            <person name="Badger J.H."/>
            <person name="Glodek A."/>
            <person name="Zhou L."/>
            <person name="Overbeek R."/>
            <person name="Gocayne J.D."/>
            <person name="Weidman J.F."/>
            <person name="McDonald L.A."/>
            <person name="Utterback T.R."/>
            <person name="Cotton M.D."/>
            <person name="Spriggs T."/>
            <person name="Artiach P."/>
            <person name="Kaine B.P."/>
            <person name="Sykes S.M."/>
            <person name="Sadow P.W."/>
            <person name="D'Andrea K.P."/>
            <person name="Bowman C."/>
            <person name="Fujii C."/>
            <person name="Garland S.A."/>
            <person name="Mason T.M."/>
            <person name="Olsen G.J."/>
            <person name="Fraser C.M."/>
            <person name="Smith H.O."/>
            <person name="Woese C.R."/>
            <person name="Venter J.C."/>
        </authorList>
    </citation>
    <scope>NUCLEOTIDE SEQUENCE [LARGE SCALE GENOMIC DNA]</scope>
    <source>
        <strain>ATCC 49558 / DSM 4304 / JCM 9628 / NBRC 100126 / VC-16</strain>
    </source>
</reference>
<name>RL5_ARCFU</name>
<gene>
    <name evidence="1" type="primary">rpl5</name>
    <name type="ordered locus">AF_1912</name>
</gene>
<feature type="chain" id="PRO_0000125050" description="Large ribosomal subunit protein uL5">
    <location>
        <begin position="1"/>
        <end position="178"/>
    </location>
</feature>